<gene>
    <name type="primary">WRKY22</name>
    <name type="ordered locus">At4g01250</name>
    <name type="ORF">A_IG002N01.6</name>
    <name type="ORF">F2N1.6</name>
</gene>
<accession>O04609</accession>
<name>WRK22_ARATH</name>
<evidence type="ECO:0000255" key="1">
    <source>
        <dbReference type="PROSITE-ProRule" id="PRU00223"/>
    </source>
</evidence>
<evidence type="ECO:0000256" key="2">
    <source>
        <dbReference type="SAM" id="MobiDB-lite"/>
    </source>
</evidence>
<evidence type="ECO:0000269" key="3">
    <source>
    </source>
</evidence>
<evidence type="ECO:0000305" key="4"/>
<protein>
    <recommendedName>
        <fullName>WRKY transcription factor 22</fullName>
    </recommendedName>
    <alternativeName>
        <fullName>WRKY DNA-binding protein 22</fullName>
    </alternativeName>
</protein>
<comment type="function">
    <text evidence="3">Transcription factor involved in the expression of defense genes in innate immune response of plants. Interacts specifically with the W box (5'-(T)TGAC[CT]-3'), a frequently occurring elicitor-responsive cis-acting element. Activates WRKY 29, SIRK and its own promoters.</text>
</comment>
<comment type="subcellular location">
    <subcellularLocation>
        <location evidence="4">Nucleus</location>
    </subcellularLocation>
</comment>
<comment type="induction">
    <text evidence="3">Induced after flagellin treatment.</text>
</comment>
<comment type="miscellaneous">
    <text>Acts downstream a MAPK cascade and therefore might be regulated by phosphorylation. WRKY 22 and WRKY 29 may provide redundant functions.</text>
</comment>
<comment type="similarity">
    <text evidence="4">Belongs to the WRKY group II-e family.</text>
</comment>
<sequence length="298" mass="32256">MADDWDLHAVVRGCSAVSSSATTTVYSPGVSSHTNPIFTVGRQSNAVSFGEIRDLYTPFTQESVVSSFSCINYPEEPRKPQNQKRPLSLSASSGSVTSKPSGSNTSRSKRRKIQHKKVCHVAAEALNSDVWAWRKYGQKPIKGSPYPRGYYRCSTSKGCLARKQVERNRSDPKMFIVTYTAEHNHPAPTHRNSLAGSTRQKPSDQQTSKSPTTTIATYSSSPVTSADEFVLPVEDHLAVGDLDGEEDLLSLSDTVVSDDFFDGLEEFAAGDSFSGNSAPASFDLSWVVNSAATTTGGI</sequence>
<feature type="chain" id="PRO_0000133664" description="WRKY transcription factor 22">
    <location>
        <begin position="1"/>
        <end position="298"/>
    </location>
</feature>
<feature type="DNA-binding region" description="WRKY" evidence="1">
    <location>
        <begin position="122"/>
        <end position="188"/>
    </location>
</feature>
<feature type="region of interest" description="Disordered" evidence="2">
    <location>
        <begin position="75"/>
        <end position="116"/>
    </location>
</feature>
<feature type="region of interest" description="Disordered" evidence="2">
    <location>
        <begin position="181"/>
        <end position="220"/>
    </location>
</feature>
<feature type="compositionally biased region" description="Low complexity" evidence="2">
    <location>
        <begin position="88"/>
        <end position="103"/>
    </location>
</feature>
<feature type="compositionally biased region" description="Basic residues" evidence="2">
    <location>
        <begin position="107"/>
        <end position="116"/>
    </location>
</feature>
<feature type="compositionally biased region" description="Polar residues" evidence="2">
    <location>
        <begin position="190"/>
        <end position="220"/>
    </location>
</feature>
<organism>
    <name type="scientific">Arabidopsis thaliana</name>
    <name type="common">Mouse-ear cress</name>
    <dbReference type="NCBI Taxonomy" id="3702"/>
    <lineage>
        <taxon>Eukaryota</taxon>
        <taxon>Viridiplantae</taxon>
        <taxon>Streptophyta</taxon>
        <taxon>Embryophyta</taxon>
        <taxon>Tracheophyta</taxon>
        <taxon>Spermatophyta</taxon>
        <taxon>Magnoliopsida</taxon>
        <taxon>eudicotyledons</taxon>
        <taxon>Gunneridae</taxon>
        <taxon>Pentapetalae</taxon>
        <taxon>rosids</taxon>
        <taxon>malvids</taxon>
        <taxon>Brassicales</taxon>
        <taxon>Brassicaceae</taxon>
        <taxon>Camelineae</taxon>
        <taxon>Arabidopsis</taxon>
    </lineage>
</organism>
<keyword id="KW-0010">Activator</keyword>
<keyword id="KW-0238">DNA-binding</keyword>
<keyword id="KW-0539">Nucleus</keyword>
<keyword id="KW-0611">Plant defense</keyword>
<keyword id="KW-1185">Reference proteome</keyword>
<keyword id="KW-0804">Transcription</keyword>
<keyword id="KW-0805">Transcription regulation</keyword>
<dbReference type="EMBL" id="AF442392">
    <property type="protein sequence ID" value="AAL35285.1"/>
    <property type="molecule type" value="mRNA"/>
</dbReference>
<dbReference type="EMBL" id="AF007269">
    <property type="protein sequence ID" value="AAB61016.1"/>
    <property type="molecule type" value="Genomic_DNA"/>
</dbReference>
<dbReference type="EMBL" id="AL161491">
    <property type="protein sequence ID" value="CAB80934.1"/>
    <property type="molecule type" value="Genomic_DNA"/>
</dbReference>
<dbReference type="EMBL" id="CP002687">
    <property type="protein sequence ID" value="AEE81999.1"/>
    <property type="molecule type" value="Genomic_DNA"/>
</dbReference>
<dbReference type="EMBL" id="AY045909">
    <property type="protein sequence ID" value="AAK76583.1"/>
    <property type="molecule type" value="mRNA"/>
</dbReference>
<dbReference type="EMBL" id="AY079404">
    <property type="protein sequence ID" value="AAL85135.1"/>
    <property type="molecule type" value="mRNA"/>
</dbReference>
<dbReference type="PIR" id="T01719">
    <property type="entry name" value="T01719"/>
</dbReference>
<dbReference type="RefSeq" id="NP_192034.1">
    <property type="nucleotide sequence ID" value="NM_116355.3"/>
</dbReference>
<dbReference type="SMR" id="O04609"/>
<dbReference type="BioGRID" id="13187">
    <property type="interactions" value="5"/>
</dbReference>
<dbReference type="FunCoup" id="O04609">
    <property type="interactions" value="388"/>
</dbReference>
<dbReference type="IntAct" id="O04609">
    <property type="interactions" value="2"/>
</dbReference>
<dbReference type="STRING" id="3702.O04609"/>
<dbReference type="PaxDb" id="3702-AT4G01250.1"/>
<dbReference type="EnsemblPlants" id="AT4G01250.1">
    <property type="protein sequence ID" value="AT4G01250.1"/>
    <property type="gene ID" value="AT4G01250"/>
</dbReference>
<dbReference type="GeneID" id="827896"/>
<dbReference type="Gramene" id="AT4G01250.1">
    <property type="protein sequence ID" value="AT4G01250.1"/>
    <property type="gene ID" value="AT4G01250"/>
</dbReference>
<dbReference type="KEGG" id="ath:AT4G01250"/>
<dbReference type="Araport" id="AT4G01250"/>
<dbReference type="TAIR" id="AT4G01250">
    <property type="gene designation" value="WRKY22"/>
</dbReference>
<dbReference type="eggNOG" id="ENOG502QW38">
    <property type="taxonomic scope" value="Eukaryota"/>
</dbReference>
<dbReference type="HOGENOM" id="CLU_029232_0_1_1"/>
<dbReference type="InParanoid" id="O04609"/>
<dbReference type="OMA" id="DIQDFYT"/>
<dbReference type="OrthoDB" id="662136at2759"/>
<dbReference type="PhylomeDB" id="O04609"/>
<dbReference type="PRO" id="PR:O04609"/>
<dbReference type="Proteomes" id="UP000006548">
    <property type="component" value="Chromosome 4"/>
</dbReference>
<dbReference type="ExpressionAtlas" id="O04609">
    <property type="expression patterns" value="baseline and differential"/>
</dbReference>
<dbReference type="GO" id="GO:0005634">
    <property type="term" value="C:nucleus"/>
    <property type="evidence" value="ECO:0007669"/>
    <property type="project" value="UniProtKB-SubCell"/>
</dbReference>
<dbReference type="GO" id="GO:0003700">
    <property type="term" value="F:DNA-binding transcription factor activity"/>
    <property type="evidence" value="ECO:0000250"/>
    <property type="project" value="TAIR"/>
</dbReference>
<dbReference type="GO" id="GO:0000976">
    <property type="term" value="F:transcription cis-regulatory region binding"/>
    <property type="evidence" value="ECO:0000353"/>
    <property type="project" value="TAIR"/>
</dbReference>
<dbReference type="GO" id="GO:0071456">
    <property type="term" value="P:cellular response to hypoxia"/>
    <property type="evidence" value="ECO:0007007"/>
    <property type="project" value="TAIR"/>
</dbReference>
<dbReference type="GO" id="GO:0006952">
    <property type="term" value="P:defense response"/>
    <property type="evidence" value="ECO:0007669"/>
    <property type="project" value="UniProtKB-KW"/>
</dbReference>
<dbReference type="GO" id="GO:0010150">
    <property type="term" value="P:leaf senescence"/>
    <property type="evidence" value="ECO:0000315"/>
    <property type="project" value="TAIR"/>
</dbReference>
<dbReference type="FunFam" id="2.20.25.80:FF:000007">
    <property type="entry name" value="WRKY transcription factor 22"/>
    <property type="match status" value="1"/>
</dbReference>
<dbReference type="Gene3D" id="2.20.25.80">
    <property type="entry name" value="WRKY domain"/>
    <property type="match status" value="1"/>
</dbReference>
<dbReference type="InterPro" id="IPR003657">
    <property type="entry name" value="WRKY_dom"/>
</dbReference>
<dbReference type="InterPro" id="IPR036576">
    <property type="entry name" value="WRKY_dom_sf"/>
</dbReference>
<dbReference type="InterPro" id="IPR044810">
    <property type="entry name" value="WRKY_plant"/>
</dbReference>
<dbReference type="PANTHER" id="PTHR32096:SF61">
    <property type="entry name" value="WRKY TRANSCRIPTION FACTOR 22"/>
    <property type="match status" value="1"/>
</dbReference>
<dbReference type="PANTHER" id="PTHR32096">
    <property type="entry name" value="WRKY TRANSCRIPTION FACTOR 30-RELATED-RELATED"/>
    <property type="match status" value="1"/>
</dbReference>
<dbReference type="Pfam" id="PF03106">
    <property type="entry name" value="WRKY"/>
    <property type="match status" value="1"/>
</dbReference>
<dbReference type="SMART" id="SM00774">
    <property type="entry name" value="WRKY"/>
    <property type="match status" value="1"/>
</dbReference>
<dbReference type="SUPFAM" id="SSF118290">
    <property type="entry name" value="WRKY DNA-binding domain"/>
    <property type="match status" value="1"/>
</dbReference>
<dbReference type="PROSITE" id="PS50811">
    <property type="entry name" value="WRKY"/>
    <property type="match status" value="1"/>
</dbReference>
<reference key="1">
    <citation type="submission" date="2001-10" db="EMBL/GenBank/DDBJ databases">
        <title>Arabidopsis thaliana transcription factor WRKY22.</title>
        <authorList>
            <person name="Ulker B."/>
            <person name="Kushnir S."/>
            <person name="Somssich I.E."/>
        </authorList>
    </citation>
    <scope>NUCLEOTIDE SEQUENCE [MRNA]</scope>
    <source>
        <strain>cv. Columbia</strain>
        <tissue>Flower</tissue>
    </source>
</reference>
<reference key="2">
    <citation type="journal article" date="1999" name="Nature">
        <title>Sequence and analysis of chromosome 4 of the plant Arabidopsis thaliana.</title>
        <authorList>
            <person name="Mayer K.F.X."/>
            <person name="Schueller C."/>
            <person name="Wambutt R."/>
            <person name="Murphy G."/>
            <person name="Volckaert G."/>
            <person name="Pohl T."/>
            <person name="Duesterhoeft A."/>
            <person name="Stiekema W."/>
            <person name="Entian K.-D."/>
            <person name="Terryn N."/>
            <person name="Harris B."/>
            <person name="Ansorge W."/>
            <person name="Brandt P."/>
            <person name="Grivell L.A."/>
            <person name="Rieger M."/>
            <person name="Weichselgartner M."/>
            <person name="de Simone V."/>
            <person name="Obermaier B."/>
            <person name="Mache R."/>
            <person name="Mueller M."/>
            <person name="Kreis M."/>
            <person name="Delseny M."/>
            <person name="Puigdomenech P."/>
            <person name="Watson M."/>
            <person name="Schmidtheini T."/>
            <person name="Reichert B."/>
            <person name="Portetelle D."/>
            <person name="Perez-Alonso M."/>
            <person name="Boutry M."/>
            <person name="Bancroft I."/>
            <person name="Vos P."/>
            <person name="Hoheisel J."/>
            <person name="Zimmermann W."/>
            <person name="Wedler H."/>
            <person name="Ridley P."/>
            <person name="Langham S.-A."/>
            <person name="McCullagh B."/>
            <person name="Bilham L."/>
            <person name="Robben J."/>
            <person name="van der Schueren J."/>
            <person name="Grymonprez B."/>
            <person name="Chuang Y.-J."/>
            <person name="Vandenbussche F."/>
            <person name="Braeken M."/>
            <person name="Weltjens I."/>
            <person name="Voet M."/>
            <person name="Bastiaens I."/>
            <person name="Aert R."/>
            <person name="Defoor E."/>
            <person name="Weitzenegger T."/>
            <person name="Bothe G."/>
            <person name="Ramsperger U."/>
            <person name="Hilbert H."/>
            <person name="Braun M."/>
            <person name="Holzer E."/>
            <person name="Brandt A."/>
            <person name="Peters S."/>
            <person name="van Staveren M."/>
            <person name="Dirkse W."/>
            <person name="Mooijman P."/>
            <person name="Klein Lankhorst R."/>
            <person name="Rose M."/>
            <person name="Hauf J."/>
            <person name="Koetter P."/>
            <person name="Berneiser S."/>
            <person name="Hempel S."/>
            <person name="Feldpausch M."/>
            <person name="Lamberth S."/>
            <person name="Van den Daele H."/>
            <person name="De Keyser A."/>
            <person name="Buysshaert C."/>
            <person name="Gielen J."/>
            <person name="Villarroel R."/>
            <person name="De Clercq R."/>
            <person name="van Montagu M."/>
            <person name="Rogers J."/>
            <person name="Cronin A."/>
            <person name="Quail M.A."/>
            <person name="Bray-Allen S."/>
            <person name="Clark L."/>
            <person name="Doggett J."/>
            <person name="Hall S."/>
            <person name="Kay M."/>
            <person name="Lennard N."/>
            <person name="McLay K."/>
            <person name="Mayes R."/>
            <person name="Pettett A."/>
            <person name="Rajandream M.A."/>
            <person name="Lyne M."/>
            <person name="Benes V."/>
            <person name="Rechmann S."/>
            <person name="Borkova D."/>
            <person name="Bloecker H."/>
            <person name="Scharfe M."/>
            <person name="Grimm M."/>
            <person name="Loehnert T.-H."/>
            <person name="Dose S."/>
            <person name="de Haan M."/>
            <person name="Maarse A.C."/>
            <person name="Schaefer M."/>
            <person name="Mueller-Auer S."/>
            <person name="Gabel C."/>
            <person name="Fuchs M."/>
            <person name="Fartmann B."/>
            <person name="Granderath K."/>
            <person name="Dauner D."/>
            <person name="Herzl A."/>
            <person name="Neumann S."/>
            <person name="Argiriou A."/>
            <person name="Vitale D."/>
            <person name="Liguori R."/>
            <person name="Piravandi E."/>
            <person name="Massenet O."/>
            <person name="Quigley F."/>
            <person name="Clabauld G."/>
            <person name="Muendlein A."/>
            <person name="Felber R."/>
            <person name="Schnabl S."/>
            <person name="Hiller R."/>
            <person name="Schmidt W."/>
            <person name="Lecharny A."/>
            <person name="Aubourg S."/>
            <person name="Chefdor F."/>
            <person name="Cooke R."/>
            <person name="Berger C."/>
            <person name="Monfort A."/>
            <person name="Casacuberta E."/>
            <person name="Gibbons T."/>
            <person name="Weber N."/>
            <person name="Vandenbol M."/>
            <person name="Bargues M."/>
            <person name="Terol J."/>
            <person name="Torres A."/>
            <person name="Perez-Perez A."/>
            <person name="Purnelle B."/>
            <person name="Bent E."/>
            <person name="Johnson S."/>
            <person name="Tacon D."/>
            <person name="Jesse T."/>
            <person name="Heijnen L."/>
            <person name="Schwarz S."/>
            <person name="Scholler P."/>
            <person name="Heber S."/>
            <person name="Francs P."/>
            <person name="Bielke C."/>
            <person name="Frishman D."/>
            <person name="Haase D."/>
            <person name="Lemcke K."/>
            <person name="Mewes H.-W."/>
            <person name="Stocker S."/>
            <person name="Zaccaria P."/>
            <person name="Bevan M."/>
            <person name="Wilson R.K."/>
            <person name="de la Bastide M."/>
            <person name="Habermann K."/>
            <person name="Parnell L."/>
            <person name="Dedhia N."/>
            <person name="Gnoj L."/>
            <person name="Schutz K."/>
            <person name="Huang E."/>
            <person name="Spiegel L."/>
            <person name="Sekhon M."/>
            <person name="Murray J."/>
            <person name="Sheet P."/>
            <person name="Cordes M."/>
            <person name="Abu-Threideh J."/>
            <person name="Stoneking T."/>
            <person name="Kalicki J."/>
            <person name="Graves T."/>
            <person name="Harmon G."/>
            <person name="Edwards J."/>
            <person name="Latreille P."/>
            <person name="Courtney L."/>
            <person name="Cloud J."/>
            <person name="Abbott A."/>
            <person name="Scott K."/>
            <person name="Johnson D."/>
            <person name="Minx P."/>
            <person name="Bentley D."/>
            <person name="Fulton B."/>
            <person name="Miller N."/>
            <person name="Greco T."/>
            <person name="Kemp K."/>
            <person name="Kramer J."/>
            <person name="Fulton L."/>
            <person name="Mardis E."/>
            <person name="Dante M."/>
            <person name="Pepin K."/>
            <person name="Hillier L.W."/>
            <person name="Nelson J."/>
            <person name="Spieth J."/>
            <person name="Ryan E."/>
            <person name="Andrews S."/>
            <person name="Geisel C."/>
            <person name="Layman D."/>
            <person name="Du H."/>
            <person name="Ali J."/>
            <person name="Berghoff A."/>
            <person name="Jones K."/>
            <person name="Drone K."/>
            <person name="Cotton M."/>
            <person name="Joshu C."/>
            <person name="Antonoiu B."/>
            <person name="Zidanic M."/>
            <person name="Strong C."/>
            <person name="Sun H."/>
            <person name="Lamar B."/>
            <person name="Yordan C."/>
            <person name="Ma P."/>
            <person name="Zhong J."/>
            <person name="Preston R."/>
            <person name="Vil D."/>
            <person name="Shekher M."/>
            <person name="Matero A."/>
            <person name="Shah R."/>
            <person name="Swaby I.K."/>
            <person name="O'Shaughnessy A."/>
            <person name="Rodriguez M."/>
            <person name="Hoffman J."/>
            <person name="Till S."/>
            <person name="Granat S."/>
            <person name="Shohdy N."/>
            <person name="Hasegawa A."/>
            <person name="Hameed A."/>
            <person name="Lodhi M."/>
            <person name="Johnson A."/>
            <person name="Chen E."/>
            <person name="Marra M.A."/>
            <person name="Martienssen R."/>
            <person name="McCombie W.R."/>
        </authorList>
    </citation>
    <scope>NUCLEOTIDE SEQUENCE [LARGE SCALE GENOMIC DNA]</scope>
    <source>
        <strain>cv. Columbia</strain>
    </source>
</reference>
<reference key="3">
    <citation type="journal article" date="2017" name="Plant J.">
        <title>Araport11: a complete reannotation of the Arabidopsis thaliana reference genome.</title>
        <authorList>
            <person name="Cheng C.Y."/>
            <person name="Krishnakumar V."/>
            <person name="Chan A.P."/>
            <person name="Thibaud-Nissen F."/>
            <person name="Schobel S."/>
            <person name="Town C.D."/>
        </authorList>
    </citation>
    <scope>GENOME REANNOTATION</scope>
    <source>
        <strain>cv. Columbia</strain>
    </source>
</reference>
<reference key="4">
    <citation type="journal article" date="2003" name="Science">
        <title>Empirical analysis of transcriptional activity in the Arabidopsis genome.</title>
        <authorList>
            <person name="Yamada K."/>
            <person name="Lim J."/>
            <person name="Dale J.M."/>
            <person name="Chen H."/>
            <person name="Shinn P."/>
            <person name="Palm C.J."/>
            <person name="Southwick A.M."/>
            <person name="Wu H.C."/>
            <person name="Kim C.J."/>
            <person name="Nguyen M."/>
            <person name="Pham P.K."/>
            <person name="Cheuk R.F."/>
            <person name="Karlin-Newmann G."/>
            <person name="Liu S.X."/>
            <person name="Lam B."/>
            <person name="Sakano H."/>
            <person name="Wu T."/>
            <person name="Yu G."/>
            <person name="Miranda M."/>
            <person name="Quach H.L."/>
            <person name="Tripp M."/>
            <person name="Chang C.H."/>
            <person name="Lee J.M."/>
            <person name="Toriumi M.J."/>
            <person name="Chan M.M."/>
            <person name="Tang C.C."/>
            <person name="Onodera C.S."/>
            <person name="Deng J.M."/>
            <person name="Akiyama K."/>
            <person name="Ansari Y."/>
            <person name="Arakawa T."/>
            <person name="Banh J."/>
            <person name="Banno F."/>
            <person name="Bowser L."/>
            <person name="Brooks S.Y."/>
            <person name="Carninci P."/>
            <person name="Chao Q."/>
            <person name="Choy N."/>
            <person name="Enju A."/>
            <person name="Goldsmith A.D."/>
            <person name="Gurjal M."/>
            <person name="Hansen N.F."/>
            <person name="Hayashizaki Y."/>
            <person name="Johnson-Hopson C."/>
            <person name="Hsuan V.W."/>
            <person name="Iida K."/>
            <person name="Karnes M."/>
            <person name="Khan S."/>
            <person name="Koesema E."/>
            <person name="Ishida J."/>
            <person name="Jiang P.X."/>
            <person name="Jones T."/>
            <person name="Kawai J."/>
            <person name="Kamiya A."/>
            <person name="Meyers C."/>
            <person name="Nakajima M."/>
            <person name="Narusaka M."/>
            <person name="Seki M."/>
            <person name="Sakurai T."/>
            <person name="Satou M."/>
            <person name="Tamse R."/>
            <person name="Vaysberg M."/>
            <person name="Wallender E.K."/>
            <person name="Wong C."/>
            <person name="Yamamura Y."/>
            <person name="Yuan S."/>
            <person name="Shinozaki K."/>
            <person name="Davis R.W."/>
            <person name="Theologis A."/>
            <person name="Ecker J.R."/>
        </authorList>
    </citation>
    <scope>NUCLEOTIDE SEQUENCE [LARGE SCALE MRNA]</scope>
    <source>
        <strain>cv. Columbia</strain>
    </source>
</reference>
<reference key="5">
    <citation type="journal article" date="2002" name="Nature">
        <title>MAP kinase signalling cascade in Arabidopsis innate immunity.</title>
        <authorList>
            <person name="Asai T."/>
            <person name="Tena G."/>
            <person name="Plotnikova J."/>
            <person name="Willmann M.R."/>
            <person name="Chiu W.-L."/>
            <person name="Gomez-Gomez L."/>
            <person name="Boller T."/>
            <person name="Ausubel F.M."/>
            <person name="Sheen J."/>
        </authorList>
    </citation>
    <scope>FUNCTION</scope>
    <scope>INDUCTION</scope>
</reference>
<proteinExistence type="evidence at transcript level"/>